<reference key="1">
    <citation type="journal article" date="2004" name="Science">
        <title>The genomic sequence of the accidental pathogen Legionella pneumophila.</title>
        <authorList>
            <person name="Chien M."/>
            <person name="Morozova I."/>
            <person name="Shi S."/>
            <person name="Sheng H."/>
            <person name="Chen J."/>
            <person name="Gomez S.M."/>
            <person name="Asamani G."/>
            <person name="Hill K."/>
            <person name="Nuara J."/>
            <person name="Feder M."/>
            <person name="Rineer J."/>
            <person name="Greenberg J.J."/>
            <person name="Steshenko V."/>
            <person name="Park S.H."/>
            <person name="Zhao B."/>
            <person name="Teplitskaya E."/>
            <person name="Edwards J.R."/>
            <person name="Pampou S."/>
            <person name="Georghiou A."/>
            <person name="Chou I.-C."/>
            <person name="Iannuccilli W."/>
            <person name="Ulz M.E."/>
            <person name="Kim D.H."/>
            <person name="Geringer-Sameth A."/>
            <person name="Goldsberry C."/>
            <person name="Morozov P."/>
            <person name="Fischer S.G."/>
            <person name="Segal G."/>
            <person name="Qu X."/>
            <person name="Rzhetsky A."/>
            <person name="Zhang P."/>
            <person name="Cayanis E."/>
            <person name="De Jong P.J."/>
            <person name="Ju J."/>
            <person name="Kalachikov S."/>
            <person name="Shuman H.A."/>
            <person name="Russo J.J."/>
        </authorList>
    </citation>
    <scope>NUCLEOTIDE SEQUENCE [LARGE SCALE GENOMIC DNA]</scope>
    <source>
        <strain>Philadelphia 1 / ATCC 33152 / DSM 7513</strain>
    </source>
</reference>
<gene>
    <name evidence="1" type="primary">tpiA</name>
    <name type="ordered locus">lpg2792</name>
</gene>
<comment type="function">
    <text evidence="1">Involved in the gluconeogenesis. Catalyzes stereospecifically the conversion of dihydroxyacetone phosphate (DHAP) to D-glyceraldehyde-3-phosphate (G3P).</text>
</comment>
<comment type="catalytic activity">
    <reaction evidence="1">
        <text>D-glyceraldehyde 3-phosphate = dihydroxyacetone phosphate</text>
        <dbReference type="Rhea" id="RHEA:18585"/>
        <dbReference type="ChEBI" id="CHEBI:57642"/>
        <dbReference type="ChEBI" id="CHEBI:59776"/>
        <dbReference type="EC" id="5.3.1.1"/>
    </reaction>
</comment>
<comment type="pathway">
    <text evidence="1">Carbohydrate biosynthesis; gluconeogenesis.</text>
</comment>
<comment type="pathway">
    <text evidence="1">Carbohydrate degradation; glycolysis; D-glyceraldehyde 3-phosphate from glycerone phosphate: step 1/1.</text>
</comment>
<comment type="subunit">
    <text evidence="1">Homodimer.</text>
</comment>
<comment type="subcellular location">
    <subcellularLocation>
        <location evidence="1">Cytoplasm</location>
    </subcellularLocation>
</comment>
<comment type="similarity">
    <text evidence="1">Belongs to the triosephosphate isomerase family.</text>
</comment>
<accession>Q5ZRT6</accession>
<organism>
    <name type="scientific">Legionella pneumophila subsp. pneumophila (strain Philadelphia 1 / ATCC 33152 / DSM 7513)</name>
    <dbReference type="NCBI Taxonomy" id="272624"/>
    <lineage>
        <taxon>Bacteria</taxon>
        <taxon>Pseudomonadati</taxon>
        <taxon>Pseudomonadota</taxon>
        <taxon>Gammaproteobacteria</taxon>
        <taxon>Legionellales</taxon>
        <taxon>Legionellaceae</taxon>
        <taxon>Legionella</taxon>
    </lineage>
</organism>
<dbReference type="EC" id="5.3.1.1" evidence="1"/>
<dbReference type="EMBL" id="AE017354">
    <property type="protein sequence ID" value="AAU28841.1"/>
    <property type="molecule type" value="Genomic_DNA"/>
</dbReference>
<dbReference type="RefSeq" id="WP_010948480.1">
    <property type="nucleotide sequence ID" value="NC_002942.5"/>
</dbReference>
<dbReference type="RefSeq" id="YP_096788.1">
    <property type="nucleotide sequence ID" value="NC_002942.5"/>
</dbReference>
<dbReference type="SMR" id="Q5ZRT6"/>
<dbReference type="STRING" id="272624.lpg2792"/>
<dbReference type="PaxDb" id="272624-lpg2792"/>
<dbReference type="GeneID" id="57036790"/>
<dbReference type="KEGG" id="lpn:lpg2792"/>
<dbReference type="PATRIC" id="fig|272624.6.peg.2973"/>
<dbReference type="eggNOG" id="COG0149">
    <property type="taxonomic scope" value="Bacteria"/>
</dbReference>
<dbReference type="HOGENOM" id="CLU_024251_2_1_6"/>
<dbReference type="OrthoDB" id="9809429at2"/>
<dbReference type="UniPathway" id="UPA00109">
    <property type="reaction ID" value="UER00189"/>
</dbReference>
<dbReference type="UniPathway" id="UPA00138"/>
<dbReference type="Proteomes" id="UP000000609">
    <property type="component" value="Chromosome"/>
</dbReference>
<dbReference type="GO" id="GO:0005829">
    <property type="term" value="C:cytosol"/>
    <property type="evidence" value="ECO:0007669"/>
    <property type="project" value="TreeGrafter"/>
</dbReference>
<dbReference type="GO" id="GO:0004807">
    <property type="term" value="F:triose-phosphate isomerase activity"/>
    <property type="evidence" value="ECO:0007669"/>
    <property type="project" value="UniProtKB-UniRule"/>
</dbReference>
<dbReference type="GO" id="GO:0006094">
    <property type="term" value="P:gluconeogenesis"/>
    <property type="evidence" value="ECO:0007669"/>
    <property type="project" value="UniProtKB-UniRule"/>
</dbReference>
<dbReference type="GO" id="GO:0046166">
    <property type="term" value="P:glyceraldehyde-3-phosphate biosynthetic process"/>
    <property type="evidence" value="ECO:0007669"/>
    <property type="project" value="TreeGrafter"/>
</dbReference>
<dbReference type="GO" id="GO:0019563">
    <property type="term" value="P:glycerol catabolic process"/>
    <property type="evidence" value="ECO:0007669"/>
    <property type="project" value="TreeGrafter"/>
</dbReference>
<dbReference type="GO" id="GO:0006096">
    <property type="term" value="P:glycolytic process"/>
    <property type="evidence" value="ECO:0007669"/>
    <property type="project" value="UniProtKB-UniRule"/>
</dbReference>
<dbReference type="CDD" id="cd00311">
    <property type="entry name" value="TIM"/>
    <property type="match status" value="1"/>
</dbReference>
<dbReference type="FunFam" id="3.20.20.70:FF:000020">
    <property type="entry name" value="Triosephosphate isomerase"/>
    <property type="match status" value="1"/>
</dbReference>
<dbReference type="Gene3D" id="3.20.20.70">
    <property type="entry name" value="Aldolase class I"/>
    <property type="match status" value="1"/>
</dbReference>
<dbReference type="HAMAP" id="MF_00147_B">
    <property type="entry name" value="TIM_B"/>
    <property type="match status" value="1"/>
</dbReference>
<dbReference type="InterPro" id="IPR013785">
    <property type="entry name" value="Aldolase_TIM"/>
</dbReference>
<dbReference type="InterPro" id="IPR035990">
    <property type="entry name" value="TIM_sf"/>
</dbReference>
<dbReference type="InterPro" id="IPR022896">
    <property type="entry name" value="TrioseP_Isoase_bac/euk"/>
</dbReference>
<dbReference type="InterPro" id="IPR000652">
    <property type="entry name" value="Triosephosphate_isomerase"/>
</dbReference>
<dbReference type="InterPro" id="IPR020861">
    <property type="entry name" value="Triosephosphate_isomerase_AS"/>
</dbReference>
<dbReference type="NCBIfam" id="TIGR00419">
    <property type="entry name" value="tim"/>
    <property type="match status" value="1"/>
</dbReference>
<dbReference type="PANTHER" id="PTHR21139">
    <property type="entry name" value="TRIOSEPHOSPHATE ISOMERASE"/>
    <property type="match status" value="1"/>
</dbReference>
<dbReference type="PANTHER" id="PTHR21139:SF42">
    <property type="entry name" value="TRIOSEPHOSPHATE ISOMERASE"/>
    <property type="match status" value="1"/>
</dbReference>
<dbReference type="Pfam" id="PF00121">
    <property type="entry name" value="TIM"/>
    <property type="match status" value="1"/>
</dbReference>
<dbReference type="SUPFAM" id="SSF51351">
    <property type="entry name" value="Triosephosphate isomerase (TIM)"/>
    <property type="match status" value="1"/>
</dbReference>
<dbReference type="PROSITE" id="PS00171">
    <property type="entry name" value="TIM_1"/>
    <property type="match status" value="1"/>
</dbReference>
<dbReference type="PROSITE" id="PS51440">
    <property type="entry name" value="TIM_2"/>
    <property type="match status" value="1"/>
</dbReference>
<proteinExistence type="inferred from homology"/>
<protein>
    <recommendedName>
        <fullName evidence="1">Triosephosphate isomerase</fullName>
        <shortName evidence="1">TIM</shortName>
        <shortName evidence="1">TPI</shortName>
        <ecNumber evidence="1">5.3.1.1</ecNumber>
    </recommendedName>
    <alternativeName>
        <fullName evidence="1">Triose-phosphate isomerase</fullName>
    </alternativeName>
</protein>
<keyword id="KW-0963">Cytoplasm</keyword>
<keyword id="KW-0312">Gluconeogenesis</keyword>
<keyword id="KW-0324">Glycolysis</keyword>
<keyword id="KW-0413">Isomerase</keyword>
<keyword id="KW-1185">Reference proteome</keyword>
<evidence type="ECO:0000255" key="1">
    <source>
        <dbReference type="HAMAP-Rule" id="MF_00147"/>
    </source>
</evidence>
<sequence>MRQKIVAGNWKMNGQIQQVTELVSQIEELIGFDCAAQVAVMPPSIYIPKVRDCLRTGKIVVGAQNVYPKDYGAYTGELSAPMLKDFDCRYVLVGHSERRQFFHEDENFVAQKFHHVKDHGMIPVLCVGETLSERENGKTEQVIAQQVLAVSAKGKDCFRDCVVAYEPVWAIGTGKTATPEQAQKIHQFIRDLVGEINDSDAKHLTLIYGGSVNENNAKALFSMPDIDGGLVGGASLNAKQFVEIVKCIN</sequence>
<feature type="chain" id="PRO_0000307493" description="Triosephosphate isomerase">
    <location>
        <begin position="1"/>
        <end position="249"/>
    </location>
</feature>
<feature type="active site" description="Electrophile" evidence="1">
    <location>
        <position position="95"/>
    </location>
</feature>
<feature type="active site" description="Proton acceptor" evidence="1">
    <location>
        <position position="166"/>
    </location>
</feature>
<feature type="binding site" evidence="1">
    <location>
        <begin position="9"/>
        <end position="11"/>
    </location>
    <ligand>
        <name>substrate</name>
    </ligand>
</feature>
<feature type="binding site" evidence="1">
    <location>
        <position position="172"/>
    </location>
    <ligand>
        <name>substrate</name>
    </ligand>
</feature>
<feature type="binding site" evidence="1">
    <location>
        <position position="211"/>
    </location>
    <ligand>
        <name>substrate</name>
    </ligand>
</feature>
<feature type="binding site" evidence="1">
    <location>
        <begin position="232"/>
        <end position="233"/>
    </location>
    <ligand>
        <name>substrate</name>
    </ligand>
</feature>
<name>TPIS_LEGPH</name>